<feature type="chain" id="PRO_0000220466" description="Cytochrome b6-f complex subunit 6">
    <location>
        <begin position="1"/>
        <end position="31"/>
    </location>
</feature>
<feature type="transmembrane region" description="Helical" evidence="1">
    <location>
        <begin position="4"/>
        <end position="26"/>
    </location>
</feature>
<gene>
    <name evidence="1" type="primary">petL</name>
</gene>
<geneLocation type="chloroplast"/>
<sequence length="31" mass="3389">MLTLTSYFGFLLAALTITSALFIGLSKIRLI</sequence>
<reference key="1">
    <citation type="journal article" date="2004" name="Nucleic Acids Res.">
        <title>Rapid evolution of RNA editing sites in a small non-essential plastid gene.</title>
        <authorList>
            <person name="Fiebig A."/>
            <person name="Stegemann S."/>
            <person name="Bock R."/>
        </authorList>
    </citation>
    <scope>NUCLEOTIDE SEQUENCE [GENOMIC DNA]</scope>
    <scope>RNA EDITING</scope>
    <source>
        <tissue>Leaf</tissue>
    </source>
</reference>
<proteinExistence type="evidence at transcript level"/>
<comment type="function">
    <text evidence="1">Component of the cytochrome b6-f complex, which mediates electron transfer between photosystem II (PSII) and photosystem I (PSI), cyclic electron flow around PSI, and state transitions. PetL is important for photoautotrophic growth as well as for electron transfer efficiency and stability of the cytochrome b6-f complex.</text>
</comment>
<comment type="subunit">
    <text evidence="1">The 4 large subunits of the cytochrome b6-f complex are cytochrome b6, subunit IV (17 kDa polypeptide, PetD), cytochrome f and the Rieske protein, while the 4 small subunits are PetG, PetL, PetM and PetN. The complex functions as a dimer.</text>
</comment>
<comment type="subcellular location">
    <subcellularLocation>
        <location evidence="1">Plastid</location>
        <location evidence="1">Chloroplast thylakoid membrane</location>
        <topology evidence="1">Single-pass membrane protein</topology>
    </subcellularLocation>
</comment>
<comment type="RNA editing">
    <location>
        <position position="2" evidence="2"/>
    </location>
</comment>
<comment type="similarity">
    <text evidence="1">Belongs to the PetL family.</text>
</comment>
<evidence type="ECO:0000255" key="1">
    <source>
        <dbReference type="HAMAP-Rule" id="MF_00433"/>
    </source>
</evidence>
<evidence type="ECO:0000269" key="2">
    <source>
    </source>
</evidence>
<protein>
    <recommendedName>
        <fullName evidence="1">Cytochrome b6-f complex subunit 6</fullName>
    </recommendedName>
    <alternativeName>
        <fullName evidence="1">Cytochrome b6-f complex subunit PetL</fullName>
    </alternativeName>
    <alternativeName>
        <fullName evidence="1">Cytochrome b6-f complex subunit VI</fullName>
    </alternativeName>
</protein>
<accession>Q5K3T5</accession>
<keyword id="KW-0150">Chloroplast</keyword>
<keyword id="KW-0249">Electron transport</keyword>
<keyword id="KW-0472">Membrane</keyword>
<keyword id="KW-0602">Photosynthesis</keyword>
<keyword id="KW-0934">Plastid</keyword>
<keyword id="KW-0691">RNA editing</keyword>
<keyword id="KW-0793">Thylakoid</keyword>
<keyword id="KW-0812">Transmembrane</keyword>
<keyword id="KW-1133">Transmembrane helix</keyword>
<keyword id="KW-0813">Transport</keyword>
<name>PETL_PHYAM</name>
<dbReference type="EMBL" id="AJ704429">
    <property type="protein sequence ID" value="CAG28641.1"/>
    <property type="molecule type" value="Genomic_DNA"/>
</dbReference>
<dbReference type="SMR" id="Q5K3T5"/>
<dbReference type="GO" id="GO:0009535">
    <property type="term" value="C:chloroplast thylakoid membrane"/>
    <property type="evidence" value="ECO:0007669"/>
    <property type="project" value="UniProtKB-SubCell"/>
</dbReference>
<dbReference type="GO" id="GO:0009512">
    <property type="term" value="C:cytochrome b6f complex"/>
    <property type="evidence" value="ECO:0007669"/>
    <property type="project" value="InterPro"/>
</dbReference>
<dbReference type="GO" id="GO:0045158">
    <property type="term" value="F:electron transporter, transferring electrons within cytochrome b6/f complex of photosystem II activity"/>
    <property type="evidence" value="ECO:0007669"/>
    <property type="project" value="UniProtKB-UniRule"/>
</dbReference>
<dbReference type="GO" id="GO:0015979">
    <property type="term" value="P:photosynthesis"/>
    <property type="evidence" value="ECO:0007669"/>
    <property type="project" value="UniProtKB-KW"/>
</dbReference>
<dbReference type="HAMAP" id="MF_00433">
    <property type="entry name" value="Cytb6_f_PetL"/>
    <property type="match status" value="1"/>
</dbReference>
<dbReference type="InterPro" id="IPR007802">
    <property type="entry name" value="Cyt_b6/f_cplx_su6"/>
</dbReference>
<dbReference type="PANTHER" id="PTHR37266">
    <property type="entry name" value="CYTOCHROME B6-F COMPLEX SUBUNIT 6"/>
    <property type="match status" value="1"/>
</dbReference>
<dbReference type="PANTHER" id="PTHR37266:SF1">
    <property type="entry name" value="CYTOCHROME B6-F COMPLEX SUBUNIT 6"/>
    <property type="match status" value="1"/>
</dbReference>
<dbReference type="Pfam" id="PF05115">
    <property type="entry name" value="PetL"/>
    <property type="match status" value="1"/>
</dbReference>
<dbReference type="SUPFAM" id="SSF103436">
    <property type="entry name" value="PetL subunit of the cytochrome b6f complex"/>
    <property type="match status" value="1"/>
</dbReference>
<organism>
    <name type="scientific">Phytolacca americana</name>
    <name type="common">American pokeweed</name>
    <name type="synonym">Phytolacca decandra</name>
    <dbReference type="NCBI Taxonomy" id="3527"/>
    <lineage>
        <taxon>Eukaryota</taxon>
        <taxon>Viridiplantae</taxon>
        <taxon>Streptophyta</taxon>
        <taxon>Embryophyta</taxon>
        <taxon>Tracheophyta</taxon>
        <taxon>Spermatophyta</taxon>
        <taxon>Magnoliopsida</taxon>
        <taxon>eudicotyledons</taxon>
        <taxon>Gunneridae</taxon>
        <taxon>Pentapetalae</taxon>
        <taxon>Caryophyllales</taxon>
        <taxon>Phytolaccaceae</taxon>
        <taxon>Phytolacca</taxon>
    </lineage>
</organism>